<reference key="1">
    <citation type="journal article" date="1993" name="Cell Motil. Cytoskeleton">
        <title>Perspectives on tubulin isotype function and evolution based on the observation that Tetrahymena thermophila microtubules contain a single alpha- and beta-tubulin.</title>
        <authorList>
            <person name="Gaertig J.A."/>
            <person name="Thatcher T.H."/>
            <person name="McGrath K.E."/>
            <person name="Callahan R."/>
            <person name="Gorovsky M.A."/>
        </authorList>
    </citation>
    <scope>NUCLEOTIDE SEQUENCE [GENOMIC DNA]</scope>
</reference>
<reference key="2">
    <citation type="journal article" date="2005" name="Science">
        <title>Tubulin polyglutamylase enzymes are members of the TTL domain protein family.</title>
        <authorList>
            <person name="Janke C."/>
            <person name="Rogowski K."/>
            <person name="Wloga D."/>
            <person name="Regnard C."/>
            <person name="Kajava A.V."/>
            <person name="Strub J.-M."/>
            <person name="Temurak N."/>
            <person name="van Dijk J."/>
            <person name="Boucher D."/>
            <person name="van Dorsselaer A."/>
            <person name="Suryavanshi S."/>
            <person name="Gaertig J."/>
            <person name="Edde B."/>
        </authorList>
    </citation>
    <scope>GLUTAMYLATION</scope>
</reference>
<reference key="3">
    <citation type="journal article" date="2009" name="Dev. Cell">
        <title>TTLL3 Is a tubulin glycine ligase that regulates the assembly of cilia.</title>
        <authorList>
            <person name="Wloga D."/>
            <person name="Webster D.M."/>
            <person name="Rogowski K."/>
            <person name="Bre M.-H."/>
            <person name="Levilliers N."/>
            <person name="Jerka-Dziadosz M."/>
            <person name="Janke C."/>
            <person name="Dougan S.T."/>
            <person name="Gaertig J."/>
        </authorList>
    </citation>
    <scope>GLYCYLATION</scope>
</reference>
<evidence type="ECO:0000250" key="1">
    <source>
        <dbReference type="UniProtKB" id="P68363"/>
    </source>
</evidence>
<evidence type="ECO:0000250" key="2">
    <source>
        <dbReference type="UniProtKB" id="Q13509"/>
    </source>
</evidence>
<evidence type="ECO:0000256" key="3">
    <source>
        <dbReference type="SAM" id="MobiDB-lite"/>
    </source>
</evidence>
<evidence type="ECO:0000305" key="4"/>
<evidence type="ECO:0007829" key="5">
    <source>
        <dbReference type="PDB" id="7MWG"/>
    </source>
</evidence>
<evidence type="ECO:0007829" key="6">
    <source>
        <dbReference type="PDB" id="7PJE"/>
    </source>
</evidence>
<feature type="chain" id="PRO_0000048316" description="Tubulin beta chain">
    <location>
        <begin position="1"/>
        <end position="443"/>
    </location>
</feature>
<feature type="region of interest" description="Disordered" evidence="3">
    <location>
        <begin position="424"/>
        <end position="443"/>
    </location>
</feature>
<feature type="compositionally biased region" description="Acidic residues" evidence="3">
    <location>
        <begin position="429"/>
        <end position="443"/>
    </location>
</feature>
<feature type="binding site" evidence="2">
    <location>
        <position position="11"/>
    </location>
    <ligand>
        <name>GTP</name>
        <dbReference type="ChEBI" id="CHEBI:37565"/>
    </ligand>
</feature>
<feature type="binding site" evidence="1">
    <location>
        <position position="69"/>
    </location>
    <ligand>
        <name>GTP</name>
        <dbReference type="ChEBI" id="CHEBI:37565"/>
    </ligand>
</feature>
<feature type="binding site" evidence="1">
    <location>
        <position position="69"/>
    </location>
    <ligand>
        <name>Mg(2+)</name>
        <dbReference type="ChEBI" id="CHEBI:18420"/>
    </ligand>
</feature>
<feature type="binding site" evidence="2">
    <location>
        <position position="138"/>
    </location>
    <ligand>
        <name>GTP</name>
        <dbReference type="ChEBI" id="CHEBI:37565"/>
    </ligand>
</feature>
<feature type="binding site" evidence="2">
    <location>
        <position position="142"/>
    </location>
    <ligand>
        <name>GTP</name>
        <dbReference type="ChEBI" id="CHEBI:37565"/>
    </ligand>
</feature>
<feature type="binding site" evidence="2">
    <location>
        <position position="143"/>
    </location>
    <ligand>
        <name>GTP</name>
        <dbReference type="ChEBI" id="CHEBI:37565"/>
    </ligand>
</feature>
<feature type="binding site" evidence="2">
    <location>
        <position position="144"/>
    </location>
    <ligand>
        <name>GTP</name>
        <dbReference type="ChEBI" id="CHEBI:37565"/>
    </ligand>
</feature>
<feature type="binding site" evidence="2">
    <location>
        <position position="204"/>
    </location>
    <ligand>
        <name>GTP</name>
        <dbReference type="ChEBI" id="CHEBI:37565"/>
    </ligand>
</feature>
<feature type="binding site" evidence="2">
    <location>
        <position position="226"/>
    </location>
    <ligand>
        <name>GTP</name>
        <dbReference type="ChEBI" id="CHEBI:37565"/>
    </ligand>
</feature>
<feature type="strand" evidence="6">
    <location>
        <begin position="3"/>
        <end position="9"/>
    </location>
</feature>
<feature type="helix" evidence="6">
    <location>
        <begin position="10"/>
        <end position="28"/>
    </location>
</feature>
<feature type="helix" evidence="6">
    <location>
        <begin position="42"/>
        <end position="45"/>
    </location>
</feature>
<feature type="helix" evidence="6">
    <location>
        <begin position="47"/>
        <end position="49"/>
    </location>
</feature>
<feature type="strand" evidence="6">
    <location>
        <begin position="51"/>
        <end position="53"/>
    </location>
</feature>
<feature type="helix" evidence="5">
    <location>
        <begin position="55"/>
        <end position="57"/>
    </location>
</feature>
<feature type="strand" evidence="6">
    <location>
        <begin position="59"/>
        <end position="61"/>
    </location>
</feature>
<feature type="strand" evidence="6">
    <location>
        <begin position="63"/>
        <end position="70"/>
    </location>
</feature>
<feature type="helix" evidence="6">
    <location>
        <begin position="71"/>
        <end position="78"/>
    </location>
</feature>
<feature type="turn" evidence="6">
    <location>
        <begin position="80"/>
        <end position="84"/>
    </location>
</feature>
<feature type="helix" evidence="6">
    <location>
        <begin position="87"/>
        <end position="89"/>
    </location>
</feature>
<feature type="strand" evidence="6">
    <location>
        <begin position="90"/>
        <end position="92"/>
    </location>
</feature>
<feature type="helix" evidence="6">
    <location>
        <begin position="101"/>
        <end position="106"/>
    </location>
</feature>
<feature type="helix" evidence="6">
    <location>
        <begin position="108"/>
        <end position="125"/>
    </location>
</feature>
<feature type="strand" evidence="6">
    <location>
        <begin position="128"/>
        <end position="142"/>
    </location>
</feature>
<feature type="helix" evidence="6">
    <location>
        <begin position="143"/>
        <end position="158"/>
    </location>
</feature>
<feature type="strand" evidence="6">
    <location>
        <begin position="162"/>
        <end position="170"/>
    </location>
</feature>
<feature type="turn" evidence="6">
    <location>
        <begin position="173"/>
        <end position="175"/>
    </location>
</feature>
<feature type="strand" evidence="5">
    <location>
        <begin position="178"/>
        <end position="180"/>
    </location>
</feature>
<feature type="helix" evidence="6">
    <location>
        <begin position="181"/>
        <end position="195"/>
    </location>
</feature>
<feature type="strand" evidence="6">
    <location>
        <begin position="197"/>
        <end position="203"/>
    </location>
</feature>
<feature type="helix" evidence="6">
    <location>
        <begin position="204"/>
        <end position="213"/>
    </location>
</feature>
<feature type="helix" evidence="6">
    <location>
        <begin position="222"/>
        <end position="241"/>
    </location>
</feature>
<feature type="helix" evidence="6">
    <location>
        <begin position="250"/>
        <end position="257"/>
    </location>
</feature>
<feature type="strand" evidence="6">
    <location>
        <begin position="265"/>
        <end position="272"/>
    </location>
</feature>
<feature type="turn" evidence="5">
    <location>
        <begin position="276"/>
        <end position="281"/>
    </location>
</feature>
<feature type="helix" evidence="6">
    <location>
        <begin position="286"/>
        <end position="292"/>
    </location>
</feature>
<feature type="helix" evidence="6">
    <location>
        <begin position="296"/>
        <end position="298"/>
    </location>
</feature>
<feature type="strand" evidence="6">
    <location>
        <begin position="299"/>
        <end position="303"/>
    </location>
</feature>
<feature type="helix" evidence="6">
    <location>
        <begin position="305"/>
        <end position="307"/>
    </location>
</feature>
<feature type="strand" evidence="6">
    <location>
        <begin position="310"/>
        <end position="320"/>
    </location>
</feature>
<feature type="helix" evidence="6">
    <location>
        <begin position="323"/>
        <end position="336"/>
    </location>
</feature>
<feature type="helix" evidence="6">
    <location>
        <begin position="338"/>
        <end position="340"/>
    </location>
</feature>
<feature type="strand" evidence="6">
    <location>
        <begin position="343"/>
        <end position="345"/>
    </location>
</feature>
<feature type="strand" evidence="6">
    <location>
        <begin position="349"/>
        <end position="355"/>
    </location>
</feature>
<feature type="strand" evidence="6">
    <location>
        <begin position="362"/>
        <end position="371"/>
    </location>
</feature>
<feature type="helix" evidence="6">
    <location>
        <begin position="372"/>
        <end position="374"/>
    </location>
</feature>
<feature type="helix" evidence="6">
    <location>
        <begin position="375"/>
        <end position="390"/>
    </location>
</feature>
<feature type="turn" evidence="6">
    <location>
        <begin position="391"/>
        <end position="395"/>
    </location>
</feature>
<feature type="helix" evidence="6">
    <location>
        <begin position="396"/>
        <end position="399"/>
    </location>
</feature>
<feature type="turn" evidence="6">
    <location>
        <begin position="400"/>
        <end position="402"/>
    </location>
</feature>
<feature type="helix" evidence="6">
    <location>
        <begin position="406"/>
        <end position="427"/>
    </location>
</feature>
<gene>
    <name type="primary">BTU1</name>
</gene>
<gene>
    <name type="primary">BTU2</name>
</gene>
<keyword id="KW-0002">3D-structure</keyword>
<keyword id="KW-0963">Cytoplasm</keyword>
<keyword id="KW-0206">Cytoskeleton</keyword>
<keyword id="KW-0342">GTP-binding</keyword>
<keyword id="KW-0460">Magnesium</keyword>
<keyword id="KW-0479">Metal-binding</keyword>
<keyword id="KW-0493">Microtubule</keyword>
<keyword id="KW-0547">Nucleotide-binding</keyword>
<sequence length="443" mass="49571">MREIVHIQGGQCGNQIGAKFWEVISDEHGIDPTGTYHGDSDLQLERINVYYNEATGGRYVPRAILMDLEPGTMDSVRAGPFGQLFRPDNFVFGQTGAGNNWAKGHYTEGAELIDSVLDVVRKEAEGCDCLQGFQITHSLGGGTGSGMGTLLISKVREEYPDRIMETFSVVPSPKVSDTVVEPYNATLSVHQLVENADECMVIDNEALYDICFRTLKLTTPTYGDLNHLVSAAMSGVTCCLRFPGQLNSDLRKLAVNLIPFPRLHFFMIGFAPLTSRGSQQYRALTVPELTQQMFDAKNMMCAADPRHGRYLTASALFRGRMSTKEVDEQMLNVQNKNSSYFVEWIPNNIKSSICDIPPKGLKMAVTFVGNSTAIQEMFKRVAEQFTAMFRRKAFLHWYTGEGMDEMEFTEAESNMNDLVSEYQQYQDATAEEEGEFEEEEGEN</sequence>
<comment type="function">
    <text>Tubulin is the major constituent of microtubules, a cylinder consisting of laterally associated linear protofilaments composed of alpha- and beta-tubulin heterodimers. Microtubules grow by the addition of GTP-tubulin dimers to the microtubule end, where a stabilizing cap forms. Below the cap, tubulin dimers are in GDP-bound state, owing to GTPase activity of alpha-tubulin.</text>
</comment>
<comment type="cofactor">
    <cofactor evidence="1">
        <name>Mg(2+)</name>
        <dbReference type="ChEBI" id="CHEBI:18420"/>
    </cofactor>
</comment>
<comment type="subunit">
    <text>Dimer of alpha and beta chains. A typical microtubule is a hollow water-filled tube with an outer diameter of 25 nm and an inner diameter of 15 nM. Alpha-beta heterodimers associate head-to-tail to form protofilaments running lengthwise along the microtubule wall with the beta-tubulin subunit facing the microtubule plus end conferring a structural polarity. Microtubules usually have 13 protofilaments but different protofilament numbers can be found in some organisms and specialized cells.</text>
</comment>
<comment type="subcellular location">
    <subcellularLocation>
        <location>Cytoplasm</location>
        <location>Cytoskeleton</location>
    </subcellularLocation>
</comment>
<comment type="PTM">
    <text>Some glutamate residues at the C-terminus are either polyglutamylated or polyglycylated. These 2 modifications occur exclusively on glutamate residues and result in either polyglutamate or polyglycine chains on the gamma-carboxyl group. Both modifications can coexist on the same protein on adjacent residues, and lowering polyglycylation levels increases polyglutamylation, and reciprocally. The precise function of such modifications is still unclear but they regulate the assembly and dynamics of axonemal microtubules.</text>
</comment>
<comment type="miscellaneous">
    <text>The sequences of the two genes coding for beta-tubulin are identical.</text>
</comment>
<comment type="similarity">
    <text evidence="4">Belongs to the tubulin family.</text>
</comment>
<accession>P41352</accession>
<organism>
    <name type="scientific">Tetrahymena thermophila</name>
    <dbReference type="NCBI Taxonomy" id="5911"/>
    <lineage>
        <taxon>Eukaryota</taxon>
        <taxon>Sar</taxon>
        <taxon>Alveolata</taxon>
        <taxon>Ciliophora</taxon>
        <taxon>Intramacronucleata</taxon>
        <taxon>Oligohymenophorea</taxon>
        <taxon>Hymenostomatida</taxon>
        <taxon>Tetrahymenina</taxon>
        <taxon>Tetrahymenidae</taxon>
        <taxon>Tetrahymena</taxon>
    </lineage>
</organism>
<dbReference type="EMBL" id="L01415">
    <property type="protein sequence ID" value="AAA30110.1"/>
    <property type="molecule type" value="Genomic_DNA"/>
</dbReference>
<dbReference type="EMBL" id="L01416">
    <property type="protein sequence ID" value="AAA30111.1"/>
    <property type="molecule type" value="Genomic_DNA"/>
</dbReference>
<dbReference type="PIR" id="S42519">
    <property type="entry name" value="S41470"/>
</dbReference>
<dbReference type="PDB" id="5UBQ">
    <property type="method" value="EM"/>
    <property type="resolution" value="5.70 A"/>
    <property type="chains" value="B/D/F=1-429"/>
</dbReference>
<dbReference type="PDB" id="5UCY">
    <property type="method" value="EM"/>
    <property type="resolution" value="4.60 A"/>
    <property type="chains" value="B=1-429"/>
</dbReference>
<dbReference type="PDB" id="6U0H">
    <property type="method" value="EM"/>
    <property type="resolution" value="4.30 A"/>
    <property type="chains" value="B=1-443"/>
</dbReference>
<dbReference type="PDB" id="6U0T">
    <property type="method" value="EM"/>
    <property type="resolution" value="4.16 A"/>
    <property type="chains" value="B/I/J/K/L/M=1-443"/>
</dbReference>
<dbReference type="PDB" id="6U0U">
    <property type="method" value="EM"/>
    <property type="resolution" value="4.16 A"/>
    <property type="chains" value="B/I/J/K/L/M=1-443"/>
</dbReference>
<dbReference type="PDB" id="7MOQ">
    <property type="method" value="EM"/>
    <property type="resolution" value="8.00 A"/>
    <property type="chains" value="Q/U/Y/q/u/y=1-443"/>
</dbReference>
<dbReference type="PDB" id="7MWG">
    <property type="method" value="EM"/>
    <property type="resolution" value="3.50 A"/>
    <property type="chains" value="B=1-443"/>
</dbReference>
<dbReference type="PDB" id="7N32">
    <property type="method" value="EM"/>
    <property type="resolution" value="4.50 A"/>
    <property type="chains" value="b/d/f/h/j/l/n/p/r/t/v/x=1-443"/>
</dbReference>
<dbReference type="PDB" id="7PJE">
    <property type="method" value="X-ray"/>
    <property type="resolution" value="1.75 A"/>
    <property type="chains" value="B/D=1-443"/>
</dbReference>
<dbReference type="PDB" id="8G2Z">
    <property type="method" value="EM"/>
    <property type="resolution" value="4.10 A"/>
    <property type="chains" value="AB/AD/AF/AH/AJ/AL/AN/BB/BD/BF/BH/BJ/BL/BN/CB/CD/CF/CH/CJ/CL/CN/DB/DD/DF/DH/DJ/DL/DN/EB/ED=1-443"/>
</dbReference>
<dbReference type="PDB" id="8G3D">
    <property type="method" value="EM"/>
    <property type="resolution" value="3.70 A"/>
    <property type="chains" value="AB/AD/AF/AH/AJ/AL/AN/BB/BD/BF/BH/BJ/BL/BN/CB/CD/CF/CH/CJ/CL/CN/DB/DD/DF/DH/DJ/DL/DN/EB/ED=1-443"/>
</dbReference>
<dbReference type="PDB" id="8SF7">
    <property type="method" value="EM"/>
    <property type="resolution" value="4.10 A"/>
    <property type="chains" value="AB/AD/AF/AH/AJ/AL/AN/BB/BD/BF/BH/BJ/BL/BN/CB/CD/CF/CH/CJ/CL/CN/DB/DD/DF/DH/DJ/DL/DN/EB/ED=1-443"/>
</dbReference>
<dbReference type="PDBsum" id="5UBQ"/>
<dbReference type="PDBsum" id="5UCY"/>
<dbReference type="PDBsum" id="6U0H"/>
<dbReference type="PDBsum" id="6U0T"/>
<dbReference type="PDBsum" id="6U0U"/>
<dbReference type="PDBsum" id="7MOQ"/>
<dbReference type="PDBsum" id="7MWG"/>
<dbReference type="PDBsum" id="7N32"/>
<dbReference type="PDBsum" id="7PJE"/>
<dbReference type="PDBsum" id="8G2Z"/>
<dbReference type="PDBsum" id="8G3D"/>
<dbReference type="PDBsum" id="8SF7"/>
<dbReference type="EMDB" id="EMD-20602"/>
<dbReference type="EMDB" id="EMD-23926"/>
<dbReference type="EMDB" id="EMD-24066"/>
<dbReference type="EMDB" id="EMD-29685"/>
<dbReference type="EMDB" id="EMD-29692"/>
<dbReference type="EMDB" id="EMD-40436"/>
<dbReference type="EMDB" id="EMD-8528"/>
<dbReference type="EMDB" id="EMD-8539"/>
<dbReference type="SMR" id="P41352"/>
<dbReference type="ABCD" id="P41352">
    <property type="antibodies" value="1 sequenced antibody"/>
</dbReference>
<dbReference type="OMA" id="WVPRSVN"/>
<dbReference type="GO" id="GO:0005737">
    <property type="term" value="C:cytoplasm"/>
    <property type="evidence" value="ECO:0007669"/>
    <property type="project" value="UniProtKB-KW"/>
</dbReference>
<dbReference type="GO" id="GO:0005874">
    <property type="term" value="C:microtubule"/>
    <property type="evidence" value="ECO:0007669"/>
    <property type="project" value="UniProtKB-KW"/>
</dbReference>
<dbReference type="GO" id="GO:0005525">
    <property type="term" value="F:GTP binding"/>
    <property type="evidence" value="ECO:0007669"/>
    <property type="project" value="UniProtKB-KW"/>
</dbReference>
<dbReference type="GO" id="GO:0003924">
    <property type="term" value="F:GTPase activity"/>
    <property type="evidence" value="ECO:0007669"/>
    <property type="project" value="InterPro"/>
</dbReference>
<dbReference type="GO" id="GO:0046872">
    <property type="term" value="F:metal ion binding"/>
    <property type="evidence" value="ECO:0007669"/>
    <property type="project" value="UniProtKB-KW"/>
</dbReference>
<dbReference type="GO" id="GO:0005200">
    <property type="term" value="F:structural constituent of cytoskeleton"/>
    <property type="evidence" value="ECO:0007669"/>
    <property type="project" value="InterPro"/>
</dbReference>
<dbReference type="GO" id="GO:0007017">
    <property type="term" value="P:microtubule-based process"/>
    <property type="evidence" value="ECO:0007669"/>
    <property type="project" value="InterPro"/>
</dbReference>
<dbReference type="CDD" id="cd02187">
    <property type="entry name" value="beta_tubulin"/>
    <property type="match status" value="1"/>
</dbReference>
<dbReference type="DisProt" id="DP01459"/>
<dbReference type="FunFam" id="1.10.287.600:FF:000006">
    <property type="entry name" value="Tubulin beta chain"/>
    <property type="match status" value="1"/>
</dbReference>
<dbReference type="FunFam" id="3.30.1330.20:FF:000002">
    <property type="entry name" value="Tubulin beta chain"/>
    <property type="match status" value="1"/>
</dbReference>
<dbReference type="FunFam" id="3.40.50.1440:FF:000005">
    <property type="entry name" value="Tubulin beta chain"/>
    <property type="match status" value="1"/>
</dbReference>
<dbReference type="Gene3D" id="1.10.287.600">
    <property type="entry name" value="Helix hairpin bin"/>
    <property type="match status" value="1"/>
</dbReference>
<dbReference type="Gene3D" id="3.30.1330.20">
    <property type="entry name" value="Tubulin/FtsZ, C-terminal domain"/>
    <property type="match status" value="1"/>
</dbReference>
<dbReference type="Gene3D" id="3.40.50.1440">
    <property type="entry name" value="Tubulin/FtsZ, GTPase domain"/>
    <property type="match status" value="1"/>
</dbReference>
<dbReference type="InterPro" id="IPR013838">
    <property type="entry name" value="Beta-tubulin_BS"/>
</dbReference>
<dbReference type="InterPro" id="IPR002453">
    <property type="entry name" value="Beta_tubulin"/>
</dbReference>
<dbReference type="InterPro" id="IPR008280">
    <property type="entry name" value="Tub_FtsZ_C"/>
</dbReference>
<dbReference type="InterPro" id="IPR000217">
    <property type="entry name" value="Tubulin"/>
</dbReference>
<dbReference type="InterPro" id="IPR037103">
    <property type="entry name" value="Tubulin/FtsZ-like_C"/>
</dbReference>
<dbReference type="InterPro" id="IPR018316">
    <property type="entry name" value="Tubulin/FtsZ_2-layer-sand-dom"/>
</dbReference>
<dbReference type="InterPro" id="IPR036525">
    <property type="entry name" value="Tubulin/FtsZ_GTPase_sf"/>
</dbReference>
<dbReference type="InterPro" id="IPR023123">
    <property type="entry name" value="Tubulin_C"/>
</dbReference>
<dbReference type="InterPro" id="IPR017975">
    <property type="entry name" value="Tubulin_CS"/>
</dbReference>
<dbReference type="InterPro" id="IPR003008">
    <property type="entry name" value="Tubulin_FtsZ_GTPase"/>
</dbReference>
<dbReference type="PANTHER" id="PTHR11588">
    <property type="entry name" value="TUBULIN"/>
    <property type="match status" value="1"/>
</dbReference>
<dbReference type="Pfam" id="PF00091">
    <property type="entry name" value="Tubulin"/>
    <property type="match status" value="1"/>
</dbReference>
<dbReference type="Pfam" id="PF03953">
    <property type="entry name" value="Tubulin_C"/>
    <property type="match status" value="1"/>
</dbReference>
<dbReference type="PRINTS" id="PR01163">
    <property type="entry name" value="BETATUBULIN"/>
</dbReference>
<dbReference type="PRINTS" id="PR01161">
    <property type="entry name" value="TUBULIN"/>
</dbReference>
<dbReference type="SMART" id="SM00864">
    <property type="entry name" value="Tubulin"/>
    <property type="match status" value="1"/>
</dbReference>
<dbReference type="SMART" id="SM00865">
    <property type="entry name" value="Tubulin_C"/>
    <property type="match status" value="1"/>
</dbReference>
<dbReference type="SUPFAM" id="SSF55307">
    <property type="entry name" value="Tubulin C-terminal domain-like"/>
    <property type="match status" value="1"/>
</dbReference>
<dbReference type="SUPFAM" id="SSF52490">
    <property type="entry name" value="Tubulin nucleotide-binding domain-like"/>
    <property type="match status" value="1"/>
</dbReference>
<dbReference type="PROSITE" id="PS00227">
    <property type="entry name" value="TUBULIN"/>
    <property type="match status" value="1"/>
</dbReference>
<dbReference type="PROSITE" id="PS00228">
    <property type="entry name" value="TUBULIN_B_AUTOREG"/>
    <property type="match status" value="1"/>
</dbReference>
<name>TBB_TETTH</name>
<protein>
    <recommendedName>
        <fullName>Tubulin beta chain</fullName>
    </recommendedName>
    <alternativeName>
        <fullName>Beta-tubulin</fullName>
    </alternativeName>
</protein>
<proteinExistence type="evidence at protein level"/>